<gene>
    <name evidence="1" type="primary">tusA</name>
    <name type="ordered locus">Ssed_0020</name>
</gene>
<protein>
    <recommendedName>
        <fullName evidence="1">Sulfur carrier protein TusA</fullName>
    </recommendedName>
</protein>
<sequence length="81" mass="9128">MSDPFSEAQHQLDALGLRCPEPVMMVRKSVRKMAQGETLLIIADDPATTRDIPSFCEFMDHKLLASQTDSTPYQYLIQKGL</sequence>
<feature type="chain" id="PRO_1000080500" description="Sulfur carrier protein TusA">
    <location>
        <begin position="1"/>
        <end position="81"/>
    </location>
</feature>
<feature type="active site" description="Cysteine persulfide intermediate" evidence="1">
    <location>
        <position position="19"/>
    </location>
</feature>
<name>TUSA_SHESH</name>
<comment type="function">
    <text evidence="1">Sulfur carrier protein which probably makes part of a sulfur-relay system.</text>
</comment>
<comment type="subcellular location">
    <subcellularLocation>
        <location evidence="1">Cytoplasm</location>
    </subcellularLocation>
</comment>
<comment type="similarity">
    <text evidence="1">Belongs to the sulfur carrier protein TusA family.</text>
</comment>
<keyword id="KW-0963">Cytoplasm</keyword>
<keyword id="KW-1185">Reference proteome</keyword>
<dbReference type="EMBL" id="CP000821">
    <property type="protein sequence ID" value="ABV34633.1"/>
    <property type="molecule type" value="Genomic_DNA"/>
</dbReference>
<dbReference type="RefSeq" id="WP_012004159.1">
    <property type="nucleotide sequence ID" value="NC_009831.1"/>
</dbReference>
<dbReference type="SMR" id="A8FP60"/>
<dbReference type="STRING" id="425104.Ssed_0020"/>
<dbReference type="KEGG" id="sse:Ssed_0020"/>
<dbReference type="eggNOG" id="COG0425">
    <property type="taxonomic scope" value="Bacteria"/>
</dbReference>
<dbReference type="HOGENOM" id="CLU_165255_5_0_6"/>
<dbReference type="OrthoDB" id="9797352at2"/>
<dbReference type="Proteomes" id="UP000002015">
    <property type="component" value="Chromosome"/>
</dbReference>
<dbReference type="GO" id="GO:0005737">
    <property type="term" value="C:cytoplasm"/>
    <property type="evidence" value="ECO:0007669"/>
    <property type="project" value="UniProtKB-SubCell"/>
</dbReference>
<dbReference type="GO" id="GO:0097163">
    <property type="term" value="F:sulfur carrier activity"/>
    <property type="evidence" value="ECO:0007669"/>
    <property type="project" value="UniProtKB-UniRule"/>
</dbReference>
<dbReference type="GO" id="GO:0002143">
    <property type="term" value="P:tRNA wobble position uridine thiolation"/>
    <property type="evidence" value="ECO:0007669"/>
    <property type="project" value="InterPro"/>
</dbReference>
<dbReference type="CDD" id="cd03423">
    <property type="entry name" value="SirA"/>
    <property type="match status" value="1"/>
</dbReference>
<dbReference type="Gene3D" id="3.30.110.40">
    <property type="entry name" value="TusA-like domain"/>
    <property type="match status" value="1"/>
</dbReference>
<dbReference type="HAMAP" id="MF_00413">
    <property type="entry name" value="Thiourid_synth_A"/>
    <property type="match status" value="1"/>
</dbReference>
<dbReference type="InterPro" id="IPR022931">
    <property type="entry name" value="Sulphur_carrier_TusA"/>
</dbReference>
<dbReference type="InterPro" id="IPR001455">
    <property type="entry name" value="TusA-like"/>
</dbReference>
<dbReference type="InterPro" id="IPR036868">
    <property type="entry name" value="TusA-like_sf"/>
</dbReference>
<dbReference type="NCBIfam" id="NF001423">
    <property type="entry name" value="PRK00299.1"/>
    <property type="match status" value="1"/>
</dbReference>
<dbReference type="PANTHER" id="PTHR33279:SF2">
    <property type="entry name" value="SULFUR CARRIER PROTEIN TUSA"/>
    <property type="match status" value="1"/>
</dbReference>
<dbReference type="PANTHER" id="PTHR33279">
    <property type="entry name" value="SULFUR CARRIER PROTEIN YEDF-RELATED"/>
    <property type="match status" value="1"/>
</dbReference>
<dbReference type="Pfam" id="PF01206">
    <property type="entry name" value="TusA"/>
    <property type="match status" value="1"/>
</dbReference>
<dbReference type="SUPFAM" id="SSF64307">
    <property type="entry name" value="SirA-like"/>
    <property type="match status" value="1"/>
</dbReference>
<dbReference type="PROSITE" id="PS01148">
    <property type="entry name" value="UPF0033"/>
    <property type="match status" value="1"/>
</dbReference>
<proteinExistence type="inferred from homology"/>
<reference key="1">
    <citation type="submission" date="2007-08" db="EMBL/GenBank/DDBJ databases">
        <title>Complete sequence of Shewanella sediminis HAW-EB3.</title>
        <authorList>
            <consortium name="US DOE Joint Genome Institute"/>
            <person name="Copeland A."/>
            <person name="Lucas S."/>
            <person name="Lapidus A."/>
            <person name="Barry K."/>
            <person name="Glavina del Rio T."/>
            <person name="Dalin E."/>
            <person name="Tice H."/>
            <person name="Pitluck S."/>
            <person name="Chertkov O."/>
            <person name="Brettin T."/>
            <person name="Bruce D."/>
            <person name="Detter J.C."/>
            <person name="Han C."/>
            <person name="Schmutz J."/>
            <person name="Larimer F."/>
            <person name="Land M."/>
            <person name="Hauser L."/>
            <person name="Kyrpides N."/>
            <person name="Kim E."/>
            <person name="Zhao J.-S."/>
            <person name="Richardson P."/>
        </authorList>
    </citation>
    <scope>NUCLEOTIDE SEQUENCE [LARGE SCALE GENOMIC DNA]</scope>
    <source>
        <strain>HAW-EB3</strain>
    </source>
</reference>
<organism>
    <name type="scientific">Shewanella sediminis (strain HAW-EB3)</name>
    <dbReference type="NCBI Taxonomy" id="425104"/>
    <lineage>
        <taxon>Bacteria</taxon>
        <taxon>Pseudomonadati</taxon>
        <taxon>Pseudomonadota</taxon>
        <taxon>Gammaproteobacteria</taxon>
        <taxon>Alteromonadales</taxon>
        <taxon>Shewanellaceae</taxon>
        <taxon>Shewanella</taxon>
    </lineage>
</organism>
<evidence type="ECO:0000255" key="1">
    <source>
        <dbReference type="HAMAP-Rule" id="MF_00413"/>
    </source>
</evidence>
<accession>A8FP60</accession>